<accession>P07439</accession>
<sequence length="162" mass="18328">MQRSEIVQAVTLLVVVFAITTAECTCPGNLDWQEYDGHCYWASTYQVRWNDAQLACQTVHPGAYLATIQSQLENAFISETVSNNRLWIGLNDIDLEGHYVWSNGEATDFTYWSSNNPNNWENQDCGVVNYDTVTGQWDDDDCNKNKNFLCKMPIIGCPPCGI</sequence>
<protein>
    <recommendedName>
        <fullName>Lectin BRA-3</fullName>
    </recommendedName>
</protein>
<feature type="signal peptide" evidence="2">
    <location>
        <begin position="1"/>
        <end position="24"/>
    </location>
</feature>
<feature type="chain" id="PRO_0000017395" description="Lectin BRA-3">
    <location>
        <begin position="25"/>
        <end position="162"/>
    </location>
</feature>
<feature type="domain" description="C-type lectin" evidence="1">
    <location>
        <begin position="25"/>
        <end position="152"/>
    </location>
</feature>
<feature type="disulfide bond">
    <location>
        <begin position="26"/>
        <end position="39"/>
    </location>
</feature>
<feature type="disulfide bond">
    <location>
        <begin position="56"/>
        <end position="150"/>
    </location>
</feature>
<feature type="disulfide bond">
    <location>
        <begin position="125"/>
        <end position="142"/>
    </location>
</feature>
<feature type="disulfide bond" description="Interchain (with C-160)">
    <location>
        <position position="157"/>
    </location>
</feature>
<feature type="disulfide bond" description="Interchain (with C-157)">
    <location>
        <position position="160"/>
    </location>
</feature>
<feature type="sequence variant">
    <original>K</original>
    <variation>R</variation>
    <location>
        <position position="146"/>
    </location>
</feature>
<reference key="1">
    <citation type="journal article" date="1993" name="Gene">
        <title>Acorn barnacle Megabalanus rosa lectin (BRA-3): cDNA cloning, gene structure and seasonal changes of mRNA and protein levels.</title>
        <authorList>
            <person name="Takamatsu N."/>
            <person name="Takeda T."/>
            <person name="Kojima M."/>
            <person name="Heishi M."/>
            <person name="Muramoto K."/>
            <person name="Kamiya H."/>
            <person name="Shiba T."/>
        </authorList>
    </citation>
    <scope>NUCLEOTIDE SEQUENCE [GENOMIC DNA]</scope>
</reference>
<reference key="2">
    <citation type="journal article" date="1986" name="Biochim. Biophys. Acta">
        <title>The amino-acid sequence of a lectin of the acorn barnacle Megabalanus rosa.</title>
        <authorList>
            <person name="Muramoto K."/>
            <person name="Kamiya H."/>
        </authorList>
    </citation>
    <scope>PROTEIN SEQUENCE OF 25-162</scope>
</reference>
<evidence type="ECO:0000255" key="1">
    <source>
        <dbReference type="PROSITE-ProRule" id="PRU00040"/>
    </source>
</evidence>
<evidence type="ECO:0000269" key="2">
    <source ref="2"/>
</evidence>
<comment type="function">
    <text>Sugar-binding protein which recognizes specific carbohydrate structures and agglutinates a variety of animal cells by binding to cell-surface glycoproteins and glycolipids. Calcium-dependent lectin. Invertebrate lectins may be involved in defense functions.</text>
</comment>
<comment type="subunit">
    <text>Homotetramer; disulfide-linked.</text>
</comment>
<comment type="tissue specificity">
    <text>Coelemic fluid.</text>
</comment>
<comment type="miscellaneous">
    <text>This lectin binds galactose.</text>
</comment>
<name>LEC3_MEGRO</name>
<keyword id="KW-0106">Calcium</keyword>
<keyword id="KW-0903">Direct protein sequencing</keyword>
<keyword id="KW-1015">Disulfide bond</keyword>
<keyword id="KW-0430">Lectin</keyword>
<keyword id="KW-0732">Signal</keyword>
<dbReference type="EMBL" id="D13302">
    <property type="protein sequence ID" value="BAA02556.1"/>
    <property type="molecule type" value="Genomic_DNA"/>
</dbReference>
<dbReference type="SMR" id="P07439"/>
<dbReference type="GO" id="GO:0030246">
    <property type="term" value="F:carbohydrate binding"/>
    <property type="evidence" value="ECO:0007669"/>
    <property type="project" value="UniProtKB-KW"/>
</dbReference>
<dbReference type="CDD" id="cd00037">
    <property type="entry name" value="CLECT"/>
    <property type="match status" value="1"/>
</dbReference>
<dbReference type="Gene3D" id="3.10.100.10">
    <property type="entry name" value="Mannose-Binding Protein A, subunit A"/>
    <property type="match status" value="1"/>
</dbReference>
<dbReference type="InterPro" id="IPR001304">
    <property type="entry name" value="C-type_lectin-like"/>
</dbReference>
<dbReference type="InterPro" id="IPR016186">
    <property type="entry name" value="C-type_lectin-like/link_sf"/>
</dbReference>
<dbReference type="InterPro" id="IPR050111">
    <property type="entry name" value="C-type_lectin/snaclec_domain"/>
</dbReference>
<dbReference type="InterPro" id="IPR018378">
    <property type="entry name" value="C-type_lectin_CS"/>
</dbReference>
<dbReference type="InterPro" id="IPR016187">
    <property type="entry name" value="CTDL_fold"/>
</dbReference>
<dbReference type="PANTHER" id="PTHR22803">
    <property type="entry name" value="MANNOSE, PHOSPHOLIPASE, LECTIN RECEPTOR RELATED"/>
    <property type="match status" value="1"/>
</dbReference>
<dbReference type="Pfam" id="PF00059">
    <property type="entry name" value="Lectin_C"/>
    <property type="match status" value="1"/>
</dbReference>
<dbReference type="SMART" id="SM00034">
    <property type="entry name" value="CLECT"/>
    <property type="match status" value="1"/>
</dbReference>
<dbReference type="SUPFAM" id="SSF56436">
    <property type="entry name" value="C-type lectin-like"/>
    <property type="match status" value="1"/>
</dbReference>
<dbReference type="PROSITE" id="PS00615">
    <property type="entry name" value="C_TYPE_LECTIN_1"/>
    <property type="match status" value="1"/>
</dbReference>
<dbReference type="PROSITE" id="PS50041">
    <property type="entry name" value="C_TYPE_LECTIN_2"/>
    <property type="match status" value="1"/>
</dbReference>
<organism>
    <name type="scientific">Megabalanus rosa</name>
    <name type="common">Acorn barnacle</name>
    <dbReference type="NCBI Taxonomy" id="6680"/>
    <lineage>
        <taxon>Eukaryota</taxon>
        <taxon>Metazoa</taxon>
        <taxon>Ecdysozoa</taxon>
        <taxon>Arthropoda</taxon>
        <taxon>Crustacea</taxon>
        <taxon>Multicrustacea</taxon>
        <taxon>Cirripedia</taxon>
        <taxon>Thoracica</taxon>
        <taxon>Thoracicalcarea</taxon>
        <taxon>Balanomorpha</taxon>
        <taxon>Balanoidea</taxon>
        <taxon>Balanidae</taxon>
        <taxon>Megabalaninae</taxon>
        <taxon>Megabalanus</taxon>
    </lineage>
</organism>
<proteinExistence type="evidence at protein level"/>